<proteinExistence type="evidence at transcript level"/>
<dbReference type="EMBL" id="AB022218">
    <property type="protein sequence ID" value="BAB02375.1"/>
    <property type="molecule type" value="Genomic_DNA"/>
</dbReference>
<dbReference type="EMBL" id="AC024081">
    <property type="protein sequence ID" value="AAF35412.1"/>
    <property type="molecule type" value="Genomic_DNA"/>
</dbReference>
<dbReference type="EMBL" id="CP002686">
    <property type="protein sequence ID" value="AEE75679.1"/>
    <property type="molecule type" value="Genomic_DNA"/>
</dbReference>
<dbReference type="EMBL" id="AY058120">
    <property type="protein sequence ID" value="AAL25537.1"/>
    <property type="molecule type" value="mRNA"/>
</dbReference>
<dbReference type="EMBL" id="AY143861">
    <property type="protein sequence ID" value="AAN28800.1"/>
    <property type="molecule type" value="mRNA"/>
</dbReference>
<dbReference type="EMBL" id="AY086298">
    <property type="protein sequence ID" value="AAM64370.1"/>
    <property type="molecule type" value="mRNA"/>
</dbReference>
<dbReference type="RefSeq" id="NP_566514.1">
    <property type="nucleotide sequence ID" value="NM_112414.3"/>
</dbReference>
<dbReference type="SMR" id="Q9LE16"/>
<dbReference type="FunCoup" id="Q9LE16">
    <property type="interactions" value="3488"/>
</dbReference>
<dbReference type="STRING" id="3702.Q9LE16"/>
<dbReference type="PaxDb" id="3702-AT3G15460.1"/>
<dbReference type="ProteomicsDB" id="240362"/>
<dbReference type="EnsemblPlants" id="AT3G15460.1">
    <property type="protein sequence ID" value="AT3G15460.1"/>
    <property type="gene ID" value="AT3G15460"/>
</dbReference>
<dbReference type="GeneID" id="820785"/>
<dbReference type="Gramene" id="AT3G15460.1">
    <property type="protein sequence ID" value="AT3G15460.1"/>
    <property type="gene ID" value="AT3G15460"/>
</dbReference>
<dbReference type="KEGG" id="ath:AT3G15460"/>
<dbReference type="Araport" id="AT3G15460"/>
<dbReference type="TAIR" id="AT3G15460">
    <property type="gene designation" value="ATBRX1-1"/>
</dbReference>
<dbReference type="eggNOG" id="KOG2971">
    <property type="taxonomic scope" value="Eukaryota"/>
</dbReference>
<dbReference type="HOGENOM" id="CLU_048373_2_0_1"/>
<dbReference type="InParanoid" id="Q9LE16"/>
<dbReference type="OMA" id="YRHRHLM"/>
<dbReference type="OrthoDB" id="1638493at2759"/>
<dbReference type="PhylomeDB" id="Q9LE16"/>
<dbReference type="CD-CODE" id="4299E36E">
    <property type="entry name" value="Nucleolus"/>
</dbReference>
<dbReference type="PRO" id="PR:Q9LE16"/>
<dbReference type="Proteomes" id="UP000006548">
    <property type="component" value="Chromosome 3"/>
</dbReference>
<dbReference type="ExpressionAtlas" id="Q9LE16">
    <property type="expression patterns" value="baseline and differential"/>
</dbReference>
<dbReference type="GO" id="GO:0005730">
    <property type="term" value="C:nucleolus"/>
    <property type="evidence" value="ECO:0000314"/>
    <property type="project" value="TAIR"/>
</dbReference>
<dbReference type="GO" id="GO:0019843">
    <property type="term" value="F:rRNA binding"/>
    <property type="evidence" value="ECO:0007669"/>
    <property type="project" value="InterPro"/>
</dbReference>
<dbReference type="GO" id="GO:0000027">
    <property type="term" value="P:ribosomal large subunit assembly"/>
    <property type="evidence" value="ECO:0000315"/>
    <property type="project" value="TAIR"/>
</dbReference>
<dbReference type="GO" id="GO:0006364">
    <property type="term" value="P:rRNA processing"/>
    <property type="evidence" value="ECO:0000315"/>
    <property type="project" value="TAIR"/>
</dbReference>
<dbReference type="InterPro" id="IPR007109">
    <property type="entry name" value="Brix"/>
</dbReference>
<dbReference type="InterPro" id="IPR026532">
    <property type="entry name" value="BRX1"/>
</dbReference>
<dbReference type="PANTHER" id="PTHR13634">
    <property type="entry name" value="RIBOSOME BIOGENESIS PROTEIN BRIX"/>
    <property type="match status" value="1"/>
</dbReference>
<dbReference type="PANTHER" id="PTHR13634:SF0">
    <property type="entry name" value="RIBOSOME BIOGENESIS PROTEIN BRX1 HOMOLOG"/>
    <property type="match status" value="1"/>
</dbReference>
<dbReference type="Pfam" id="PF04427">
    <property type="entry name" value="Brix"/>
    <property type="match status" value="1"/>
</dbReference>
<dbReference type="SMART" id="SM00879">
    <property type="entry name" value="Brix"/>
    <property type="match status" value="1"/>
</dbReference>
<dbReference type="SUPFAM" id="SSF52954">
    <property type="entry name" value="Class II aaRS ABD-related"/>
    <property type="match status" value="1"/>
</dbReference>
<dbReference type="PROSITE" id="PS50833">
    <property type="entry name" value="BRIX"/>
    <property type="match status" value="1"/>
</dbReference>
<protein>
    <recommendedName>
        <fullName evidence="6">Ribosome biogenesis protein BRX1 homolog 1</fullName>
        <shortName evidence="5">AtBRX1-1</shortName>
    </recommendedName>
    <alternativeName>
        <fullName>Brix domain-containing protein 2</fullName>
    </alternativeName>
</protein>
<comment type="function">
    <text evidence="4">Involved in pre-rRNA processing and required for biogenesis of the large (60S) ribosomal subunit. Required for proper development.</text>
</comment>
<comment type="subcellular location">
    <subcellularLocation>
        <location evidence="4">Nucleus</location>
        <location evidence="4">Nucleolus</location>
    </subcellularLocation>
    <text evidence="4">Associates with 60S pre-ribosomes.</text>
</comment>
<comment type="tissue specificity">
    <text evidence="4">Expressed in roots, rosette leaves, stems, flowers, siliques and seeds.</text>
</comment>
<comment type="induction">
    <text evidence="3">Induced by glucose.</text>
</comment>
<comment type="disruption phenotype">
    <text evidence="4">Delayed growth rate.</text>
</comment>
<comment type="similarity">
    <text evidence="6">Belongs to the BRX1 family.</text>
</comment>
<keyword id="KW-0539">Nucleus</keyword>
<keyword id="KW-1185">Reference proteome</keyword>
<keyword id="KW-0690">Ribosome biogenesis</keyword>
<keyword id="KW-0698">rRNA processing</keyword>
<name>BRX11_ARATH</name>
<gene>
    <name evidence="5" type="primary">BRIX1-1</name>
    <name evidence="7" type="ordered locus">At3g15460</name>
    <name evidence="8" type="ORF">MJK13.12</name>
</gene>
<organism>
    <name type="scientific">Arabidopsis thaliana</name>
    <name type="common">Mouse-ear cress</name>
    <dbReference type="NCBI Taxonomy" id="3702"/>
    <lineage>
        <taxon>Eukaryota</taxon>
        <taxon>Viridiplantae</taxon>
        <taxon>Streptophyta</taxon>
        <taxon>Embryophyta</taxon>
        <taxon>Tracheophyta</taxon>
        <taxon>Spermatophyta</taxon>
        <taxon>Magnoliopsida</taxon>
        <taxon>eudicotyledons</taxon>
        <taxon>Gunneridae</taxon>
        <taxon>Pentapetalae</taxon>
        <taxon>rosids</taxon>
        <taxon>malvids</taxon>
        <taxon>Brassicales</taxon>
        <taxon>Brassicaceae</taxon>
        <taxon>Camelineae</taxon>
        <taxon>Arabidopsis</taxon>
    </lineage>
</organism>
<evidence type="ECO:0000255" key="1">
    <source>
        <dbReference type="PROSITE-ProRule" id="PRU00034"/>
    </source>
</evidence>
<evidence type="ECO:0000256" key="2">
    <source>
        <dbReference type="SAM" id="MobiDB-lite"/>
    </source>
</evidence>
<evidence type="ECO:0000269" key="3">
    <source>
    </source>
</evidence>
<evidence type="ECO:0000269" key="4">
    <source>
    </source>
</evidence>
<evidence type="ECO:0000303" key="5">
    <source>
    </source>
</evidence>
<evidence type="ECO:0000305" key="6"/>
<evidence type="ECO:0000312" key="7">
    <source>
        <dbReference type="Araport" id="AT3G15460"/>
    </source>
</evidence>
<evidence type="ECO:0000312" key="8">
    <source>
        <dbReference type="EMBL" id="AAF35412.1"/>
    </source>
</evidence>
<accession>Q9LE16</accession>
<accession>Q93Z54</accession>
<reference key="1">
    <citation type="journal article" date="2000" name="DNA Res.">
        <title>Structural analysis of Arabidopsis thaliana chromosome 3. I. Sequence features of the regions of 4,504,864 bp covered by sixty P1 and TAC clones.</title>
        <authorList>
            <person name="Sato S."/>
            <person name="Nakamura Y."/>
            <person name="Kaneko T."/>
            <person name="Katoh T."/>
            <person name="Asamizu E."/>
            <person name="Tabata S."/>
        </authorList>
    </citation>
    <scope>NUCLEOTIDE SEQUENCE [LARGE SCALE GENOMIC DNA]</scope>
    <source>
        <strain>cv. Columbia</strain>
    </source>
</reference>
<reference key="2">
    <citation type="journal article" date="2000" name="Nature">
        <title>Sequence and analysis of chromosome 3 of the plant Arabidopsis thaliana.</title>
        <authorList>
            <person name="Salanoubat M."/>
            <person name="Lemcke K."/>
            <person name="Rieger M."/>
            <person name="Ansorge W."/>
            <person name="Unseld M."/>
            <person name="Fartmann B."/>
            <person name="Valle G."/>
            <person name="Bloecker H."/>
            <person name="Perez-Alonso M."/>
            <person name="Obermaier B."/>
            <person name="Delseny M."/>
            <person name="Boutry M."/>
            <person name="Grivell L.A."/>
            <person name="Mache R."/>
            <person name="Puigdomenech P."/>
            <person name="De Simone V."/>
            <person name="Choisne N."/>
            <person name="Artiguenave F."/>
            <person name="Robert C."/>
            <person name="Brottier P."/>
            <person name="Wincker P."/>
            <person name="Cattolico L."/>
            <person name="Weissenbach J."/>
            <person name="Saurin W."/>
            <person name="Quetier F."/>
            <person name="Schaefer M."/>
            <person name="Mueller-Auer S."/>
            <person name="Gabel C."/>
            <person name="Fuchs M."/>
            <person name="Benes V."/>
            <person name="Wurmbach E."/>
            <person name="Drzonek H."/>
            <person name="Erfle H."/>
            <person name="Jordan N."/>
            <person name="Bangert S."/>
            <person name="Wiedelmann R."/>
            <person name="Kranz H."/>
            <person name="Voss H."/>
            <person name="Holland R."/>
            <person name="Brandt P."/>
            <person name="Nyakatura G."/>
            <person name="Vezzi A."/>
            <person name="D'Angelo M."/>
            <person name="Pallavicini A."/>
            <person name="Toppo S."/>
            <person name="Simionati B."/>
            <person name="Conrad A."/>
            <person name="Hornischer K."/>
            <person name="Kauer G."/>
            <person name="Loehnert T.-H."/>
            <person name="Nordsiek G."/>
            <person name="Reichelt J."/>
            <person name="Scharfe M."/>
            <person name="Schoen O."/>
            <person name="Bargues M."/>
            <person name="Terol J."/>
            <person name="Climent J."/>
            <person name="Navarro P."/>
            <person name="Collado C."/>
            <person name="Perez-Perez A."/>
            <person name="Ottenwaelder B."/>
            <person name="Duchemin D."/>
            <person name="Cooke R."/>
            <person name="Laudie M."/>
            <person name="Berger-Llauro C."/>
            <person name="Purnelle B."/>
            <person name="Masuy D."/>
            <person name="de Haan M."/>
            <person name="Maarse A.C."/>
            <person name="Alcaraz J.-P."/>
            <person name="Cottet A."/>
            <person name="Casacuberta E."/>
            <person name="Monfort A."/>
            <person name="Argiriou A."/>
            <person name="Flores M."/>
            <person name="Liguori R."/>
            <person name="Vitale D."/>
            <person name="Mannhaupt G."/>
            <person name="Haase D."/>
            <person name="Schoof H."/>
            <person name="Rudd S."/>
            <person name="Zaccaria P."/>
            <person name="Mewes H.-W."/>
            <person name="Mayer K.F.X."/>
            <person name="Kaul S."/>
            <person name="Town C.D."/>
            <person name="Koo H.L."/>
            <person name="Tallon L.J."/>
            <person name="Jenkins J."/>
            <person name="Rooney T."/>
            <person name="Rizzo M."/>
            <person name="Walts A."/>
            <person name="Utterback T."/>
            <person name="Fujii C.Y."/>
            <person name="Shea T.P."/>
            <person name="Creasy T.H."/>
            <person name="Haas B."/>
            <person name="Maiti R."/>
            <person name="Wu D."/>
            <person name="Peterson J."/>
            <person name="Van Aken S."/>
            <person name="Pai G."/>
            <person name="Militscher J."/>
            <person name="Sellers P."/>
            <person name="Gill J.E."/>
            <person name="Feldblyum T.V."/>
            <person name="Preuss D."/>
            <person name="Lin X."/>
            <person name="Nierman W.C."/>
            <person name="Salzberg S.L."/>
            <person name="White O."/>
            <person name="Venter J.C."/>
            <person name="Fraser C.M."/>
            <person name="Kaneko T."/>
            <person name="Nakamura Y."/>
            <person name="Sato S."/>
            <person name="Kato T."/>
            <person name="Asamizu E."/>
            <person name="Sasamoto S."/>
            <person name="Kimura T."/>
            <person name="Idesawa K."/>
            <person name="Kawashima K."/>
            <person name="Kishida Y."/>
            <person name="Kiyokawa C."/>
            <person name="Kohara M."/>
            <person name="Matsumoto M."/>
            <person name="Matsuno A."/>
            <person name="Muraki A."/>
            <person name="Nakayama S."/>
            <person name="Nakazaki N."/>
            <person name="Shinpo S."/>
            <person name="Takeuchi C."/>
            <person name="Wada T."/>
            <person name="Watanabe A."/>
            <person name="Yamada M."/>
            <person name="Yasuda M."/>
            <person name="Tabata S."/>
        </authorList>
    </citation>
    <scope>NUCLEOTIDE SEQUENCE [LARGE SCALE GENOMIC DNA]</scope>
    <source>
        <strain>cv. Columbia</strain>
    </source>
</reference>
<reference key="3">
    <citation type="journal article" date="2017" name="Plant J.">
        <title>Araport11: a complete reannotation of the Arabidopsis thaliana reference genome.</title>
        <authorList>
            <person name="Cheng C.Y."/>
            <person name="Krishnakumar V."/>
            <person name="Chan A.P."/>
            <person name="Thibaud-Nissen F."/>
            <person name="Schobel S."/>
            <person name="Town C.D."/>
        </authorList>
    </citation>
    <scope>GENOME REANNOTATION</scope>
    <source>
        <strain>cv. Columbia</strain>
    </source>
</reference>
<reference key="4">
    <citation type="journal article" date="2003" name="Science">
        <title>Empirical analysis of transcriptional activity in the Arabidopsis genome.</title>
        <authorList>
            <person name="Yamada K."/>
            <person name="Lim J."/>
            <person name="Dale J.M."/>
            <person name="Chen H."/>
            <person name="Shinn P."/>
            <person name="Palm C.J."/>
            <person name="Southwick A.M."/>
            <person name="Wu H.C."/>
            <person name="Kim C.J."/>
            <person name="Nguyen M."/>
            <person name="Pham P.K."/>
            <person name="Cheuk R.F."/>
            <person name="Karlin-Newmann G."/>
            <person name="Liu S.X."/>
            <person name="Lam B."/>
            <person name="Sakano H."/>
            <person name="Wu T."/>
            <person name="Yu G."/>
            <person name="Miranda M."/>
            <person name="Quach H.L."/>
            <person name="Tripp M."/>
            <person name="Chang C.H."/>
            <person name="Lee J.M."/>
            <person name="Toriumi M.J."/>
            <person name="Chan M.M."/>
            <person name="Tang C.C."/>
            <person name="Onodera C.S."/>
            <person name="Deng J.M."/>
            <person name="Akiyama K."/>
            <person name="Ansari Y."/>
            <person name="Arakawa T."/>
            <person name="Banh J."/>
            <person name="Banno F."/>
            <person name="Bowser L."/>
            <person name="Brooks S.Y."/>
            <person name="Carninci P."/>
            <person name="Chao Q."/>
            <person name="Choy N."/>
            <person name="Enju A."/>
            <person name="Goldsmith A.D."/>
            <person name="Gurjal M."/>
            <person name="Hansen N.F."/>
            <person name="Hayashizaki Y."/>
            <person name="Johnson-Hopson C."/>
            <person name="Hsuan V.W."/>
            <person name="Iida K."/>
            <person name="Karnes M."/>
            <person name="Khan S."/>
            <person name="Koesema E."/>
            <person name="Ishida J."/>
            <person name="Jiang P.X."/>
            <person name="Jones T."/>
            <person name="Kawai J."/>
            <person name="Kamiya A."/>
            <person name="Meyers C."/>
            <person name="Nakajima M."/>
            <person name="Narusaka M."/>
            <person name="Seki M."/>
            <person name="Sakurai T."/>
            <person name="Satou M."/>
            <person name="Tamse R."/>
            <person name="Vaysberg M."/>
            <person name="Wallender E.K."/>
            <person name="Wong C."/>
            <person name="Yamamura Y."/>
            <person name="Yuan S."/>
            <person name="Shinozaki K."/>
            <person name="Davis R.W."/>
            <person name="Theologis A."/>
            <person name="Ecker J.R."/>
        </authorList>
    </citation>
    <scope>NUCLEOTIDE SEQUENCE [LARGE SCALE MRNA]</scope>
    <source>
        <strain>cv. Columbia</strain>
    </source>
</reference>
<reference key="5">
    <citation type="submission" date="2002-03" db="EMBL/GenBank/DDBJ databases">
        <title>Full-length cDNA from Arabidopsis thaliana.</title>
        <authorList>
            <person name="Brover V.V."/>
            <person name="Troukhan M.E."/>
            <person name="Alexandrov N.A."/>
            <person name="Lu Y.-P."/>
            <person name="Flavell R.B."/>
            <person name="Feldmann K.A."/>
        </authorList>
    </citation>
    <scope>NUCLEOTIDE SEQUENCE [LARGE SCALE MRNA]</scope>
</reference>
<reference key="6">
    <citation type="journal article" date="2007" name="Plant Physiol.">
        <title>Genetic variation suggests interaction between cold acclimation and metabolic regulation of leaf senescence.</title>
        <authorList>
            <person name="Masclaux-Daubresse C."/>
            <person name="Purdy S."/>
            <person name="Lemaitre T."/>
            <person name="Pourtau N."/>
            <person name="Taconnat L."/>
            <person name="Renou J.P."/>
            <person name="Wingler A."/>
        </authorList>
    </citation>
    <scope>INDUCTION BY GLUCOSE</scope>
</reference>
<reference key="7">
    <citation type="journal article" date="2015" name="RNA">
        <title>atBRX1-1 and atBRX1-2 are involved in an alternative rRNA processing pathway in Arabidopsis thaliana.</title>
        <authorList>
            <person name="Weis B.L."/>
            <person name="Palm D."/>
            <person name="Missbach S."/>
            <person name="Bohnsack M.T."/>
            <person name="Schleiff E."/>
        </authorList>
    </citation>
    <scope>FUNCTION</scope>
    <scope>SUBCELLULAR LOCATION</scope>
    <scope>TISSUE SPECIFICITY</scope>
    <scope>DISRUPTION PHENOTYPE</scope>
</reference>
<feature type="chain" id="PRO_0000438373" description="Ribosome biogenesis protein BRX1 homolog 1">
    <location>
        <begin position="1"/>
        <end position="315"/>
    </location>
</feature>
<feature type="domain" description="Brix" evidence="1">
    <location>
        <begin position="53"/>
        <end position="256"/>
    </location>
</feature>
<feature type="region of interest" description="Disordered" evidence="2">
    <location>
        <begin position="1"/>
        <end position="35"/>
    </location>
</feature>
<feature type="compositionally biased region" description="Basic and acidic residues" evidence="2">
    <location>
        <begin position="19"/>
        <end position="35"/>
    </location>
</feature>
<feature type="sequence conflict" description="In Ref. 4; AAL25537/AAN28800." evidence="6" ref="4">
    <original>L</original>
    <variation>V</variation>
    <location>
        <position position="148"/>
    </location>
</feature>
<sequence>MGRKRKHSETVTAAPVKDSAPERPQRTLLGWKDKKEDAENSKPAYASVFRNKEKVLVTCSRRINFRYRHLMLNMVSLLPHCKKDSKVEAKSSRGATLNELIELKGSSSCLFFECRKHKDLYMWMVKSPGGPSVKFLVNAVHTMEELKLTGNHLKGSRPLLTFSSNFENDAHWKLLKEMLTQIFGIPEGHRKSKPYHDHVFVFSIVDDHIWFRNYQISVPHNESDKIARGDLDKMTLIEVGPRFCLNPIKIFGGSFGGTTLYENPFYVSPNQIRALEKRNKAGKFAKKIKAKTRRKMHELSNPLEPDEFTDMWNDE</sequence>